<sequence>MEISALLTSAGINISICIVLLSLYSILRKQPANYCVYFGRRLVCGGARRYDPFWYERFVPSPSWLVKAWETSEDELLAAAGLDAVVFLRMVIFSIRIFFIVAVICIAFVLPVNYYGQPMVHKEIHLESSEVFTIENLKEGSKWLWVHCLALYIITSAACLLLYFEYSTIAKMRLGHITGCASKPSQFTVLIRAIPWSPEQSYSDTLSKFFTNYYSSSYVSHQMVYHNGIIQRLLRDAERMCQTLKHVSPEINCKPSLRPCTFCGGPTATSSFHILSNEADSVKGMELGELTMTTTTTEQERSAAFVFFKTRYDALVVSEVLQSSNPMLWVTDLAPEPHDVYWKNLNIPYRQLWIRKIATLVGAVAFMFVFLIPVTFIQGLTQLVQLSHAFPFLRGILSKNFINQVITGYLPSVILILFFYAVPPLMMYFSALEGCISRSIRKKSACIKVLYFTIWNVFFVNILSGSVIRQLNVFSSVRDIPAQLARAVPTQAGFFMTYCFTSGWASLACEIMQPMALIWNLVAKVVTKNEDESYETLRFPYHTEIPRLLLFGLLGFTNSVIAPLILPFLLIYFFLAYLIYKNQILNVYITKYESGGQYWPIFHNTTIFSLILTQIIALGFFGLKLSTVASGFTIPLILLTLLFSEYCRQRFAPIFNKNPAQVLIDMDRADEISGKMEELHKKLHNVYSQIPLHSQKSSSKAECSNPFKKQELPDPEKLKPEEGDAIAKELWGFQGNESGQEHDTKS</sequence>
<proteinExistence type="evidence at transcript level"/>
<organism>
    <name type="scientific">Arabidopsis thaliana</name>
    <name type="common">Mouse-ear cress</name>
    <dbReference type="NCBI Taxonomy" id="3702"/>
    <lineage>
        <taxon>Eukaryota</taxon>
        <taxon>Viridiplantae</taxon>
        <taxon>Streptophyta</taxon>
        <taxon>Embryophyta</taxon>
        <taxon>Tracheophyta</taxon>
        <taxon>Spermatophyta</taxon>
        <taxon>Magnoliopsida</taxon>
        <taxon>eudicotyledons</taxon>
        <taxon>Gunneridae</taxon>
        <taxon>Pentapetalae</taxon>
        <taxon>rosids</taxon>
        <taxon>malvids</taxon>
        <taxon>Brassicales</taxon>
        <taxon>Brassicaceae</taxon>
        <taxon>Camelineae</taxon>
        <taxon>Arabidopsis</taxon>
    </lineage>
</organism>
<protein>
    <recommendedName>
        <fullName evidence="4">Hyperosmolality-gated Ca2+ permeable channel 2.1</fullName>
        <shortName evidence="4">AtOSCA2.1</shortName>
    </recommendedName>
</protein>
<comment type="function">
    <text evidence="1">Acts as an osmosensitive calcium-permeable cation channel.</text>
</comment>
<comment type="subcellular location">
    <subcellularLocation>
        <location evidence="5">Membrane</location>
        <topology evidence="5">Multi-pass membrane protein</topology>
    </subcellularLocation>
</comment>
<comment type="alternative products">
    <event type="alternative splicing"/>
    <isoform>
        <id>F4IBD7-1</id>
        <name>1</name>
        <sequence type="displayed"/>
    </isoform>
    <text>A number of isoforms are produced. According to EST sequences.</text>
</comment>
<comment type="similarity">
    <text evidence="5">Belongs to the CSC1 (TC 1.A.17) family.</text>
</comment>
<comment type="sequence caution" evidence="5">
    <conflict type="erroneous initiation">
        <sequence resource="EMBL-CDS" id="BAA88270"/>
    </conflict>
    <text>Truncated N-terminus.</text>
</comment>
<comment type="sequence caution" evidence="5">
    <conflict type="erroneous gene model prediction">
        <sequence resource="EMBL-CDS" id="BAB83877"/>
    </conflict>
</comment>
<comment type="sequence caution" evidence="5">
    <conflict type="erroneous gene model prediction">
        <sequence resource="EMBL-CDS" id="BAB84010"/>
    </conflict>
</comment>
<name>OSC21_ARATH</name>
<keyword id="KW-0025">Alternative splicing</keyword>
<keyword id="KW-0106">Calcium</keyword>
<keyword id="KW-0407">Ion channel</keyword>
<keyword id="KW-0406">Ion transport</keyword>
<keyword id="KW-0472">Membrane</keyword>
<keyword id="KW-1185">Reference proteome</keyword>
<keyword id="KW-0812">Transmembrane</keyword>
<keyword id="KW-1133">Transmembrane helix</keyword>
<keyword id="KW-0813">Transport</keyword>
<feature type="chain" id="PRO_0000429808" description="Hyperosmolality-gated Ca2+ permeable channel 2.1">
    <location>
        <begin position="1"/>
        <end position="746"/>
    </location>
</feature>
<feature type="transmembrane region" description="Helical" evidence="2">
    <location>
        <begin position="3"/>
        <end position="23"/>
    </location>
</feature>
<feature type="transmembrane region" description="Helical" evidence="2">
    <location>
        <begin position="90"/>
        <end position="110"/>
    </location>
</feature>
<feature type="transmembrane region" description="Helical" evidence="2">
    <location>
        <begin position="144"/>
        <end position="164"/>
    </location>
</feature>
<feature type="transmembrane region" description="Helical" evidence="2">
    <location>
        <begin position="357"/>
        <end position="377"/>
    </location>
</feature>
<feature type="transmembrane region" description="Helical" evidence="2">
    <location>
        <begin position="405"/>
        <end position="425"/>
    </location>
</feature>
<feature type="transmembrane region" description="Helical" evidence="2">
    <location>
        <begin position="445"/>
        <end position="465"/>
    </location>
</feature>
<feature type="transmembrane region" description="Helical" evidence="2">
    <location>
        <begin position="492"/>
        <end position="512"/>
    </location>
</feature>
<feature type="transmembrane region" description="Helical" evidence="2">
    <location>
        <begin position="560"/>
        <end position="580"/>
    </location>
</feature>
<feature type="transmembrane region" description="Helical" evidence="2">
    <location>
        <begin position="601"/>
        <end position="621"/>
    </location>
</feature>
<feature type="transmembrane region" description="Helical" evidence="2">
    <location>
        <begin position="623"/>
        <end position="643"/>
    </location>
</feature>
<feature type="region of interest" description="Disordered" evidence="3">
    <location>
        <begin position="692"/>
        <end position="723"/>
    </location>
</feature>
<feature type="compositionally biased region" description="Polar residues" evidence="3">
    <location>
        <begin position="692"/>
        <end position="702"/>
    </location>
</feature>
<feature type="compositionally biased region" description="Basic and acidic residues" evidence="3">
    <location>
        <begin position="708"/>
        <end position="723"/>
    </location>
</feature>
<evidence type="ECO:0000250" key="1">
    <source>
        <dbReference type="UniProtKB" id="Q5XEZ5"/>
    </source>
</evidence>
<evidence type="ECO:0000255" key="2"/>
<evidence type="ECO:0000256" key="3">
    <source>
        <dbReference type="SAM" id="MobiDB-lite"/>
    </source>
</evidence>
<evidence type="ECO:0000303" key="4">
    <source>
    </source>
</evidence>
<evidence type="ECO:0000305" key="5"/>
<gene>
    <name evidence="4" type="primary">OSCA2.1</name>
    <name type="synonym">RXW8</name>
    <name type="ordered locus">At1g58520</name>
    <name type="ORF">R18I</name>
    <name type="ORF">X7J</name>
</gene>
<dbReference type="EMBL" id="AB008023">
    <property type="protein sequence ID" value="BAA88270.1"/>
    <property type="status" value="ALT_INIT"/>
    <property type="molecule type" value="mRNA"/>
</dbReference>
<dbReference type="EMBL" id="AB077822">
    <property type="protein sequence ID" value="BAB83877.1"/>
    <property type="status" value="ALT_SEQ"/>
    <property type="molecule type" value="Genomic_DNA"/>
</dbReference>
<dbReference type="EMBL" id="AB078516">
    <property type="protein sequence ID" value="BAB84010.1"/>
    <property type="status" value="ALT_SEQ"/>
    <property type="molecule type" value="Genomic_DNA"/>
</dbReference>
<dbReference type="EMBL" id="CP002684">
    <property type="protein sequence ID" value="AEE33553.2"/>
    <property type="molecule type" value="Genomic_DNA"/>
</dbReference>
<dbReference type="EMBL" id="CP002684">
    <property type="protein sequence ID" value="AEE33554.1"/>
    <property type="molecule type" value="Genomic_DNA"/>
</dbReference>
<dbReference type="EMBL" id="CP002684">
    <property type="protein sequence ID" value="ANM59973.1"/>
    <property type="molecule type" value="Genomic_DNA"/>
</dbReference>
<dbReference type="EMBL" id="CP002684">
    <property type="protein sequence ID" value="ANM59974.1"/>
    <property type="molecule type" value="Genomic_DNA"/>
</dbReference>
<dbReference type="EMBL" id="CP002684">
    <property type="protein sequence ID" value="ANM59975.1"/>
    <property type="molecule type" value="Genomic_DNA"/>
</dbReference>
<dbReference type="PIR" id="T52460">
    <property type="entry name" value="T52460"/>
</dbReference>
<dbReference type="RefSeq" id="NP_001319268.1">
    <molecule id="F4IBD7-1"/>
    <property type="nucleotide sequence ID" value="NM_001333840.1"/>
</dbReference>
<dbReference type="RefSeq" id="NP_001319269.1">
    <molecule id="F4IBD7-1"/>
    <property type="nucleotide sequence ID" value="NM_001333839.1"/>
</dbReference>
<dbReference type="RefSeq" id="NP_001322289.1">
    <molecule id="F4IBD7-1"/>
    <property type="nucleotide sequence ID" value="NM_001333843.1"/>
</dbReference>
<dbReference type="RefSeq" id="NP_001322290.1">
    <molecule id="F4IBD7-1"/>
    <property type="nucleotide sequence ID" value="NM_001333841.1"/>
</dbReference>
<dbReference type="RefSeq" id="NP_683440.2">
    <molecule id="F4IBD7-1"/>
    <property type="nucleotide sequence ID" value="NM_148599.4"/>
</dbReference>
<dbReference type="SMR" id="F4IBD7"/>
<dbReference type="BioGRID" id="27443">
    <property type="interactions" value="8"/>
</dbReference>
<dbReference type="FunCoup" id="F4IBD7">
    <property type="interactions" value="560"/>
</dbReference>
<dbReference type="IntAct" id="F4IBD7">
    <property type="interactions" value="6"/>
</dbReference>
<dbReference type="STRING" id="3702.F4IBD7"/>
<dbReference type="GlyGen" id="F4IBD7">
    <property type="glycosylation" value="1 site"/>
</dbReference>
<dbReference type="iPTMnet" id="F4IBD7"/>
<dbReference type="PaxDb" id="3702-AT1G58520.2"/>
<dbReference type="ProteomicsDB" id="222772">
    <molecule id="F4IBD7-1"/>
</dbReference>
<dbReference type="EnsemblPlants" id="AT1G58520.1">
    <molecule id="F4IBD7-1"/>
    <property type="protein sequence ID" value="AT1G58520.1"/>
    <property type="gene ID" value="AT1G58520"/>
</dbReference>
<dbReference type="EnsemblPlants" id="AT1G58520.2">
    <molecule id="F4IBD7-1"/>
    <property type="protein sequence ID" value="AT1G58520.2"/>
    <property type="gene ID" value="AT1G58520"/>
</dbReference>
<dbReference type="EnsemblPlants" id="AT1G58520.4">
    <molecule id="F4IBD7-1"/>
    <property type="protein sequence ID" value="AT1G58520.4"/>
    <property type="gene ID" value="AT1G58520"/>
</dbReference>
<dbReference type="EnsemblPlants" id="AT1G58520.6">
    <molecule id="F4IBD7-1"/>
    <property type="protein sequence ID" value="AT1G58520.6"/>
    <property type="gene ID" value="AT1G58520"/>
</dbReference>
<dbReference type="EnsemblPlants" id="AT1G58520.7">
    <molecule id="F4IBD7-1"/>
    <property type="protein sequence ID" value="AT1G58520.7"/>
    <property type="gene ID" value="AT1G58520"/>
</dbReference>
<dbReference type="GeneID" id="842218"/>
<dbReference type="Gramene" id="AT1G58520.1">
    <molecule id="F4IBD7-1"/>
    <property type="protein sequence ID" value="AT1G58520.1"/>
    <property type="gene ID" value="AT1G58520"/>
</dbReference>
<dbReference type="Gramene" id="AT1G58520.2">
    <molecule id="F4IBD7-1"/>
    <property type="protein sequence ID" value="AT1G58520.2"/>
    <property type="gene ID" value="AT1G58520"/>
</dbReference>
<dbReference type="Gramene" id="AT1G58520.4">
    <molecule id="F4IBD7-1"/>
    <property type="protein sequence ID" value="AT1G58520.4"/>
    <property type="gene ID" value="AT1G58520"/>
</dbReference>
<dbReference type="Gramene" id="AT1G58520.6">
    <molecule id="F4IBD7-1"/>
    <property type="protein sequence ID" value="AT1G58520.6"/>
    <property type="gene ID" value="AT1G58520"/>
</dbReference>
<dbReference type="Gramene" id="AT1G58520.7">
    <molecule id="F4IBD7-1"/>
    <property type="protein sequence ID" value="AT1G58520.7"/>
    <property type="gene ID" value="AT1G58520"/>
</dbReference>
<dbReference type="KEGG" id="ath:AT1G58520"/>
<dbReference type="Araport" id="AT1G58520"/>
<dbReference type="TAIR" id="AT1G58520">
    <property type="gene designation" value="RXW8"/>
</dbReference>
<dbReference type="eggNOG" id="KOG1134">
    <property type="taxonomic scope" value="Eukaryota"/>
</dbReference>
<dbReference type="HOGENOM" id="CLU_002458_7_2_1"/>
<dbReference type="InParanoid" id="F4IBD7"/>
<dbReference type="OrthoDB" id="1689567at2759"/>
<dbReference type="PRO" id="PR:F4IBD7"/>
<dbReference type="Proteomes" id="UP000006548">
    <property type="component" value="Chromosome 1"/>
</dbReference>
<dbReference type="ExpressionAtlas" id="F4IBD7">
    <property type="expression patterns" value="baseline and differential"/>
</dbReference>
<dbReference type="GO" id="GO:0016020">
    <property type="term" value="C:membrane"/>
    <property type="evidence" value="ECO:0007669"/>
    <property type="project" value="UniProtKB-SubCell"/>
</dbReference>
<dbReference type="GO" id="GO:0005227">
    <property type="term" value="F:calcium-activated cation channel activity"/>
    <property type="evidence" value="ECO:0007669"/>
    <property type="project" value="InterPro"/>
</dbReference>
<dbReference type="InterPro" id="IPR045122">
    <property type="entry name" value="Csc1-like"/>
</dbReference>
<dbReference type="InterPro" id="IPR003864">
    <property type="entry name" value="CSC1/OSCA1-like_7TM"/>
</dbReference>
<dbReference type="InterPro" id="IPR027815">
    <property type="entry name" value="CSC1/OSCA1-like_cyt"/>
</dbReference>
<dbReference type="InterPro" id="IPR032880">
    <property type="entry name" value="Csc1/OSCA1-like_N"/>
</dbReference>
<dbReference type="PANTHER" id="PTHR13018:SF117">
    <property type="entry name" value="CSC1-LIKE PROTEIN RXW8"/>
    <property type="match status" value="1"/>
</dbReference>
<dbReference type="PANTHER" id="PTHR13018">
    <property type="entry name" value="PROBABLE MEMBRANE PROTEIN DUF221-RELATED"/>
    <property type="match status" value="1"/>
</dbReference>
<dbReference type="Pfam" id="PF14703">
    <property type="entry name" value="PHM7_cyt"/>
    <property type="match status" value="1"/>
</dbReference>
<dbReference type="Pfam" id="PF02714">
    <property type="entry name" value="RSN1_7TM"/>
    <property type="match status" value="1"/>
</dbReference>
<dbReference type="Pfam" id="PF13967">
    <property type="entry name" value="RSN1_TM"/>
    <property type="match status" value="1"/>
</dbReference>
<reference key="1">
    <citation type="journal article" date="1999" name="Gene">
        <title>Isolation and analysis of cDNA within a 300 kb Arabidopsis thaliana genomic region located around the 100 map unit of chromosome 1.</title>
        <authorList>
            <person name="Kato A."/>
            <person name="Suzuki M."/>
            <person name="Kuwahara A."/>
            <person name="Ooe H."/>
            <person name="Higano-Inaba K."/>
            <person name="Komeda Y."/>
        </authorList>
    </citation>
    <scope>NUCLEOTIDE SEQUENCE [GENOMIC DNA]</scope>
    <scope>NUCLEOTIDE SEQUENCE [MRNA] OF 2-746</scope>
    <source>
        <strain>cv. Columbia</strain>
    </source>
</reference>
<reference key="2">
    <citation type="journal article" date="2000" name="Nature">
        <title>Sequence and analysis of chromosome 1 of the plant Arabidopsis thaliana.</title>
        <authorList>
            <person name="Theologis A."/>
            <person name="Ecker J.R."/>
            <person name="Palm C.J."/>
            <person name="Federspiel N.A."/>
            <person name="Kaul S."/>
            <person name="White O."/>
            <person name="Alonso J."/>
            <person name="Altafi H."/>
            <person name="Araujo R."/>
            <person name="Bowman C.L."/>
            <person name="Brooks S.Y."/>
            <person name="Buehler E."/>
            <person name="Chan A."/>
            <person name="Chao Q."/>
            <person name="Chen H."/>
            <person name="Cheuk R.F."/>
            <person name="Chin C.W."/>
            <person name="Chung M.K."/>
            <person name="Conn L."/>
            <person name="Conway A.B."/>
            <person name="Conway A.R."/>
            <person name="Creasy T.H."/>
            <person name="Dewar K."/>
            <person name="Dunn P."/>
            <person name="Etgu P."/>
            <person name="Feldblyum T.V."/>
            <person name="Feng J.-D."/>
            <person name="Fong B."/>
            <person name="Fujii C.Y."/>
            <person name="Gill J.E."/>
            <person name="Goldsmith A.D."/>
            <person name="Haas B."/>
            <person name="Hansen N.F."/>
            <person name="Hughes B."/>
            <person name="Huizar L."/>
            <person name="Hunter J.L."/>
            <person name="Jenkins J."/>
            <person name="Johnson-Hopson C."/>
            <person name="Khan S."/>
            <person name="Khaykin E."/>
            <person name="Kim C.J."/>
            <person name="Koo H.L."/>
            <person name="Kremenetskaia I."/>
            <person name="Kurtz D.B."/>
            <person name="Kwan A."/>
            <person name="Lam B."/>
            <person name="Langin-Hooper S."/>
            <person name="Lee A."/>
            <person name="Lee J.M."/>
            <person name="Lenz C.A."/>
            <person name="Li J.H."/>
            <person name="Li Y.-P."/>
            <person name="Lin X."/>
            <person name="Liu S.X."/>
            <person name="Liu Z.A."/>
            <person name="Luros J.S."/>
            <person name="Maiti R."/>
            <person name="Marziali A."/>
            <person name="Militscher J."/>
            <person name="Miranda M."/>
            <person name="Nguyen M."/>
            <person name="Nierman W.C."/>
            <person name="Osborne B.I."/>
            <person name="Pai G."/>
            <person name="Peterson J."/>
            <person name="Pham P.K."/>
            <person name="Rizzo M."/>
            <person name="Rooney T."/>
            <person name="Rowley D."/>
            <person name="Sakano H."/>
            <person name="Salzberg S.L."/>
            <person name="Schwartz J.R."/>
            <person name="Shinn P."/>
            <person name="Southwick A.M."/>
            <person name="Sun H."/>
            <person name="Tallon L.J."/>
            <person name="Tambunga G."/>
            <person name="Toriumi M.J."/>
            <person name="Town C.D."/>
            <person name="Utterback T."/>
            <person name="Van Aken S."/>
            <person name="Vaysberg M."/>
            <person name="Vysotskaia V.S."/>
            <person name="Walker M."/>
            <person name="Wu D."/>
            <person name="Yu G."/>
            <person name="Fraser C.M."/>
            <person name="Venter J.C."/>
            <person name="Davis R.W."/>
        </authorList>
    </citation>
    <scope>NUCLEOTIDE SEQUENCE [LARGE SCALE GENOMIC DNA]</scope>
    <source>
        <strain>cv. Columbia</strain>
    </source>
</reference>
<reference key="3">
    <citation type="journal article" date="2017" name="Plant J.">
        <title>Araport11: a complete reannotation of the Arabidopsis thaliana reference genome.</title>
        <authorList>
            <person name="Cheng C.Y."/>
            <person name="Krishnakumar V."/>
            <person name="Chan A.P."/>
            <person name="Thibaud-Nissen F."/>
            <person name="Schobel S."/>
            <person name="Town C.D."/>
        </authorList>
    </citation>
    <scope>GENOME REANNOTATION</scope>
    <source>
        <strain>cv. Columbia</strain>
    </source>
</reference>
<reference key="4">
    <citation type="journal article" date="2014" name="Cell Res.">
        <title>DUF221 proteins are a family of osmosensitive calcium-permeable cation channels conserved across eukaryotes.</title>
        <authorList>
            <person name="Hou C."/>
            <person name="Tian W."/>
            <person name="Kleist T."/>
            <person name="He K."/>
            <person name="Garcia V."/>
            <person name="Bai F."/>
            <person name="Hao Y."/>
            <person name="Luan S."/>
            <person name="Li L."/>
        </authorList>
    </citation>
    <scope>GENE FAMILY</scope>
</reference>
<reference key="5">
    <citation type="journal article" date="2014" name="Nature">
        <title>OSCA1 mediates osmotic-stress-evoked Ca(2+) increases vital for osmosensing in Arabidopsis.</title>
        <authorList>
            <person name="Yuan F."/>
            <person name="Yang H."/>
            <person name="Xue Y."/>
            <person name="Kong D."/>
            <person name="Ye R."/>
            <person name="Li C."/>
            <person name="Zhang J."/>
            <person name="Theprungsirikul L."/>
            <person name="Shrift T."/>
            <person name="Krichilsky B."/>
            <person name="Johnson D.M."/>
            <person name="Swift G.B."/>
            <person name="He Y."/>
            <person name="Siedow J.N."/>
            <person name="Pei Z.M."/>
        </authorList>
    </citation>
    <scope>GENE FAMILY</scope>
</reference>
<accession>F4IBD7</accession>
<accession>F4IBD5</accession>
<accession>Q8W3K1</accession>
<accession>Q9SM00</accession>